<organism>
    <name type="scientific">Karelsulcia muelleri (strain GWSS)</name>
    <name type="common">Sulcia muelleri</name>
    <dbReference type="NCBI Taxonomy" id="444179"/>
    <lineage>
        <taxon>Bacteria</taxon>
        <taxon>Pseudomonadati</taxon>
        <taxon>Bacteroidota</taxon>
        <taxon>Flavobacteriia</taxon>
        <taxon>Flavobacteriales</taxon>
        <taxon>Candidatus Karelsulcia</taxon>
    </lineage>
</organism>
<accession>A8Z671</accession>
<sequence>MSIKKTKPITSSQRFKVINTFKEITKKNPEKTLSIGKKKTGGRNNSGKITIRYLGGGHKKKYRIIDYKRNKFGIPAIIKHIEYDPNRSCLIYLLFYIDGEKRYIPSINGLNIGNKILSDKKTTTELGNAMYIMNIPLGTIISCVELIPGKGAILARSAGSYAQLIAKSKKFATIKLPSGEKRMVLSTCMATIGSIYNSDHKLEMDGKAGRKRWLGRKPRTRGVAMNPVDHPMGGGEGKSSGGHPRNRNGIPSNGFKTRNKKKITNKYIIKK</sequence>
<dbReference type="EMBL" id="CP000770">
    <property type="protein sequence ID" value="ABS30622.1"/>
    <property type="molecule type" value="Genomic_DNA"/>
</dbReference>
<dbReference type="SMR" id="A8Z671"/>
<dbReference type="STRING" id="444179.SMGWSS_225"/>
<dbReference type="KEGG" id="smg:SMGWSS_225"/>
<dbReference type="HOGENOM" id="CLU_036235_2_1_10"/>
<dbReference type="Proteomes" id="UP000000781">
    <property type="component" value="Chromosome"/>
</dbReference>
<dbReference type="GO" id="GO:0015934">
    <property type="term" value="C:large ribosomal subunit"/>
    <property type="evidence" value="ECO:0007669"/>
    <property type="project" value="InterPro"/>
</dbReference>
<dbReference type="GO" id="GO:0019843">
    <property type="term" value="F:rRNA binding"/>
    <property type="evidence" value="ECO:0007669"/>
    <property type="project" value="UniProtKB-UniRule"/>
</dbReference>
<dbReference type="GO" id="GO:0003735">
    <property type="term" value="F:structural constituent of ribosome"/>
    <property type="evidence" value="ECO:0007669"/>
    <property type="project" value="InterPro"/>
</dbReference>
<dbReference type="GO" id="GO:0016740">
    <property type="term" value="F:transferase activity"/>
    <property type="evidence" value="ECO:0007669"/>
    <property type="project" value="InterPro"/>
</dbReference>
<dbReference type="GO" id="GO:0002181">
    <property type="term" value="P:cytoplasmic translation"/>
    <property type="evidence" value="ECO:0007669"/>
    <property type="project" value="TreeGrafter"/>
</dbReference>
<dbReference type="FunFam" id="2.30.30.30:FF:000001">
    <property type="entry name" value="50S ribosomal protein L2"/>
    <property type="match status" value="1"/>
</dbReference>
<dbReference type="FunFam" id="4.10.950.10:FF:000001">
    <property type="entry name" value="50S ribosomal protein L2"/>
    <property type="match status" value="1"/>
</dbReference>
<dbReference type="Gene3D" id="2.30.30.30">
    <property type="match status" value="1"/>
</dbReference>
<dbReference type="Gene3D" id="2.40.50.140">
    <property type="entry name" value="Nucleic acid-binding proteins"/>
    <property type="match status" value="1"/>
</dbReference>
<dbReference type="Gene3D" id="4.10.950.10">
    <property type="entry name" value="Ribosomal protein L2, domain 3"/>
    <property type="match status" value="1"/>
</dbReference>
<dbReference type="HAMAP" id="MF_01320_B">
    <property type="entry name" value="Ribosomal_uL2_B"/>
    <property type="match status" value="1"/>
</dbReference>
<dbReference type="InterPro" id="IPR012340">
    <property type="entry name" value="NA-bd_OB-fold"/>
</dbReference>
<dbReference type="InterPro" id="IPR014722">
    <property type="entry name" value="Rib_uL2_dom2"/>
</dbReference>
<dbReference type="InterPro" id="IPR002171">
    <property type="entry name" value="Ribosomal_uL2"/>
</dbReference>
<dbReference type="InterPro" id="IPR005880">
    <property type="entry name" value="Ribosomal_uL2_bac/org-type"/>
</dbReference>
<dbReference type="InterPro" id="IPR022669">
    <property type="entry name" value="Ribosomal_uL2_C"/>
</dbReference>
<dbReference type="InterPro" id="IPR022671">
    <property type="entry name" value="Ribosomal_uL2_CS"/>
</dbReference>
<dbReference type="InterPro" id="IPR014726">
    <property type="entry name" value="Ribosomal_uL2_dom3"/>
</dbReference>
<dbReference type="InterPro" id="IPR022666">
    <property type="entry name" value="Ribosomal_uL2_RNA-bd_dom"/>
</dbReference>
<dbReference type="InterPro" id="IPR008991">
    <property type="entry name" value="Translation_prot_SH3-like_sf"/>
</dbReference>
<dbReference type="NCBIfam" id="TIGR01171">
    <property type="entry name" value="rplB_bact"/>
    <property type="match status" value="1"/>
</dbReference>
<dbReference type="PANTHER" id="PTHR13691:SF5">
    <property type="entry name" value="LARGE RIBOSOMAL SUBUNIT PROTEIN UL2M"/>
    <property type="match status" value="1"/>
</dbReference>
<dbReference type="PANTHER" id="PTHR13691">
    <property type="entry name" value="RIBOSOMAL PROTEIN L2"/>
    <property type="match status" value="1"/>
</dbReference>
<dbReference type="Pfam" id="PF00181">
    <property type="entry name" value="Ribosomal_L2"/>
    <property type="match status" value="1"/>
</dbReference>
<dbReference type="Pfam" id="PF03947">
    <property type="entry name" value="Ribosomal_L2_C"/>
    <property type="match status" value="1"/>
</dbReference>
<dbReference type="PIRSF" id="PIRSF002158">
    <property type="entry name" value="Ribosomal_L2"/>
    <property type="match status" value="1"/>
</dbReference>
<dbReference type="SMART" id="SM01383">
    <property type="entry name" value="Ribosomal_L2"/>
    <property type="match status" value="1"/>
</dbReference>
<dbReference type="SMART" id="SM01382">
    <property type="entry name" value="Ribosomal_L2_C"/>
    <property type="match status" value="1"/>
</dbReference>
<dbReference type="SUPFAM" id="SSF50249">
    <property type="entry name" value="Nucleic acid-binding proteins"/>
    <property type="match status" value="1"/>
</dbReference>
<dbReference type="SUPFAM" id="SSF50104">
    <property type="entry name" value="Translation proteins SH3-like domain"/>
    <property type="match status" value="1"/>
</dbReference>
<dbReference type="PROSITE" id="PS00467">
    <property type="entry name" value="RIBOSOMAL_L2"/>
    <property type="match status" value="1"/>
</dbReference>
<feature type="chain" id="PRO_1000141625" description="Large ribosomal subunit protein uL2">
    <location>
        <begin position="1"/>
        <end position="271"/>
    </location>
</feature>
<feature type="region of interest" description="Disordered" evidence="2">
    <location>
        <begin position="221"/>
        <end position="271"/>
    </location>
</feature>
<feature type="compositionally biased region" description="Basic residues" evidence="2">
    <location>
        <begin position="257"/>
        <end position="271"/>
    </location>
</feature>
<protein>
    <recommendedName>
        <fullName evidence="1">Large ribosomal subunit protein uL2</fullName>
    </recommendedName>
    <alternativeName>
        <fullName evidence="3">50S ribosomal protein L2</fullName>
    </alternativeName>
</protein>
<reference key="1">
    <citation type="journal article" date="2007" name="Proc. Natl. Acad. Sci. U.S.A.">
        <title>Parallel genomic evolution and metabolic interdependence in an ancient symbiosis.</title>
        <authorList>
            <person name="McCutcheon J.P."/>
            <person name="Moran N.A."/>
        </authorList>
    </citation>
    <scope>NUCLEOTIDE SEQUENCE [LARGE SCALE GENOMIC DNA]</scope>
    <source>
        <strain>GWSS</strain>
    </source>
</reference>
<gene>
    <name evidence="1" type="primary">rplB</name>
    <name type="ordered locus">SMGWSS_225</name>
</gene>
<comment type="function">
    <text evidence="1">One of the primary rRNA binding proteins. Required for association of the 30S and 50S subunits to form the 70S ribosome, for tRNA binding and peptide bond formation. It has been suggested to have peptidyltransferase activity; this is somewhat controversial. Makes several contacts with the 16S rRNA in the 70S ribosome.</text>
</comment>
<comment type="subunit">
    <text evidence="1">Part of the 50S ribosomal subunit. Forms a bridge to the 30S subunit in the 70S ribosome.</text>
</comment>
<comment type="similarity">
    <text evidence="1">Belongs to the universal ribosomal protein uL2 family.</text>
</comment>
<keyword id="KW-0687">Ribonucleoprotein</keyword>
<keyword id="KW-0689">Ribosomal protein</keyword>
<keyword id="KW-0694">RNA-binding</keyword>
<keyword id="KW-0699">rRNA-binding</keyword>
<proteinExistence type="inferred from homology"/>
<name>RL2_KARMG</name>
<evidence type="ECO:0000255" key="1">
    <source>
        <dbReference type="HAMAP-Rule" id="MF_01320"/>
    </source>
</evidence>
<evidence type="ECO:0000256" key="2">
    <source>
        <dbReference type="SAM" id="MobiDB-lite"/>
    </source>
</evidence>
<evidence type="ECO:0000305" key="3"/>